<feature type="chain" id="PRO_0000146434" description="Small ribosomal subunit protein uS12m">
    <location>
        <begin position="1"/>
        <end position="125"/>
    </location>
</feature>
<feature type="sequence conflict" description="In Ref. 1; CAA45194." evidence="3" ref="1">
    <original>QVLI</original>
    <variation>AGVV</variation>
    <location>
        <begin position="79"/>
        <end position="82"/>
    </location>
</feature>
<feature type="sequence conflict" description="In Ref. 1." evidence="3" ref="1">
    <original>C</original>
    <variation>G</variation>
    <location>
        <position position="97"/>
    </location>
</feature>
<feature type="sequence conflict" description="In Ref. 1; CAA45194." evidence="3" ref="1">
    <original>RRR</original>
    <variation>EII</variation>
    <location>
        <begin position="110"/>
        <end position="112"/>
    </location>
</feature>
<keyword id="KW-0496">Mitochondrion</keyword>
<keyword id="KW-0687">Ribonucleoprotein</keyword>
<keyword id="KW-0689">Ribosomal protein</keyword>
<keyword id="KW-0691">RNA editing</keyword>
<comment type="function">
    <text>Protein S12 is involved in the translation initiation step.</text>
</comment>
<comment type="subcellular location">
    <subcellularLocation>
        <location>Mitochondrion</location>
    </subcellularLocation>
</comment>
<comment type="RNA editing">
    <location>
        <position position="35" evidence="1 2"/>
    </location>
    <location>
        <position position="49" evidence="1 2"/>
    </location>
    <location>
        <position position="66" evidence="1 2"/>
    </location>
    <location>
        <position position="74" evidence="1 2"/>
    </location>
    <location>
        <position position="90" evidence="1 2"/>
    </location>
    <location>
        <position position="95" evidence="1 2"/>
    </location>
</comment>
<comment type="similarity">
    <text evidence="3">Belongs to the universal ribosomal protein uS12 family.</text>
</comment>
<proteinExistence type="evidence at transcript level"/>
<evidence type="ECO:0000269" key="1">
    <source>
    </source>
</evidence>
<evidence type="ECO:0000269" key="2">
    <source>
    </source>
</evidence>
<evidence type="ECO:0000305" key="3"/>
<accession>P48857</accession>
<accession>O24084</accession>
<accession>Q6YSP2</accession>
<protein>
    <recommendedName>
        <fullName evidence="3">Small ribosomal subunit protein uS12m</fullName>
    </recommendedName>
    <alternativeName>
        <fullName>Ribosomal protein S12, mitochondrial</fullName>
    </alternativeName>
</protein>
<dbReference type="EMBL" id="X63654">
    <property type="protein sequence ID" value="CAA45194.1"/>
    <property type="status" value="ALT_SEQ"/>
    <property type="molecule type" value="Genomic_DNA"/>
</dbReference>
<dbReference type="EMBL" id="D13697">
    <property type="protein sequence ID" value="BAA02857.1"/>
    <property type="status" value="ALT_SEQ"/>
    <property type="molecule type" value="Genomic_DNA"/>
</dbReference>
<dbReference type="EMBL" id="AP006444">
    <property type="protein sequence ID" value="BAC98896.1"/>
    <property type="molecule type" value="Genomic_DNA"/>
</dbReference>
<dbReference type="PIR" id="T09502">
    <property type="entry name" value="T09502"/>
</dbReference>
<dbReference type="RefSeq" id="YP_717147.1">
    <property type="nucleotide sequence ID" value="NC_008285.1"/>
</dbReference>
<dbReference type="SMR" id="P48857"/>
<dbReference type="GeneID" id="4237947"/>
<dbReference type="KEGG" id="bna:4237947"/>
<dbReference type="OrthoDB" id="414309at2759"/>
<dbReference type="GO" id="GO:0005739">
    <property type="term" value="C:mitochondrion"/>
    <property type="evidence" value="ECO:0007669"/>
    <property type="project" value="UniProtKB-SubCell"/>
</dbReference>
<dbReference type="GO" id="GO:0015935">
    <property type="term" value="C:small ribosomal subunit"/>
    <property type="evidence" value="ECO:0007669"/>
    <property type="project" value="InterPro"/>
</dbReference>
<dbReference type="GO" id="GO:0003735">
    <property type="term" value="F:structural constituent of ribosome"/>
    <property type="evidence" value="ECO:0007669"/>
    <property type="project" value="InterPro"/>
</dbReference>
<dbReference type="GO" id="GO:0006412">
    <property type="term" value="P:translation"/>
    <property type="evidence" value="ECO:0007669"/>
    <property type="project" value="InterPro"/>
</dbReference>
<dbReference type="CDD" id="cd03368">
    <property type="entry name" value="Ribosomal_S12"/>
    <property type="match status" value="1"/>
</dbReference>
<dbReference type="FunFam" id="2.40.50.140:FF:000099">
    <property type="entry name" value="Ribosomal protein S12, mitochondrial"/>
    <property type="match status" value="1"/>
</dbReference>
<dbReference type="Gene3D" id="2.40.50.140">
    <property type="entry name" value="Nucleic acid-binding proteins"/>
    <property type="match status" value="1"/>
</dbReference>
<dbReference type="HAMAP" id="MF_00403_B">
    <property type="entry name" value="Ribosomal_uS12_B"/>
    <property type="match status" value="1"/>
</dbReference>
<dbReference type="InterPro" id="IPR012340">
    <property type="entry name" value="NA-bd_OB-fold"/>
</dbReference>
<dbReference type="InterPro" id="IPR006032">
    <property type="entry name" value="Ribosomal_uS12"/>
</dbReference>
<dbReference type="InterPro" id="IPR005679">
    <property type="entry name" value="Ribosomal_uS12_bac"/>
</dbReference>
<dbReference type="NCBIfam" id="TIGR00981">
    <property type="entry name" value="rpsL_bact"/>
    <property type="match status" value="1"/>
</dbReference>
<dbReference type="PANTHER" id="PTHR11652">
    <property type="entry name" value="30S RIBOSOMAL PROTEIN S12 FAMILY MEMBER"/>
    <property type="match status" value="1"/>
</dbReference>
<dbReference type="Pfam" id="PF00164">
    <property type="entry name" value="Ribosom_S12_S23"/>
    <property type="match status" value="1"/>
</dbReference>
<dbReference type="PIRSF" id="PIRSF002133">
    <property type="entry name" value="Ribosomal_S12/S23"/>
    <property type="match status" value="1"/>
</dbReference>
<dbReference type="PRINTS" id="PR01034">
    <property type="entry name" value="RIBOSOMALS12"/>
</dbReference>
<dbReference type="SUPFAM" id="SSF50249">
    <property type="entry name" value="Nucleic acid-binding proteins"/>
    <property type="match status" value="1"/>
</dbReference>
<dbReference type="PROSITE" id="PS00055">
    <property type="entry name" value="RIBOSOMAL_S12"/>
    <property type="match status" value="1"/>
</dbReference>
<name>RT12_BRANA</name>
<reference key="1">
    <citation type="submission" date="1992-01" db="EMBL/GenBank/DDBJ databases">
        <authorList>
            <person name="Ye F."/>
            <person name="Bernhardt J."/>
            <person name="Abel W.O."/>
        </authorList>
    </citation>
    <scope>NUCLEOTIDE SEQUENCE [GENOMIC DNA]</scope>
    <source>
        <tissue>Leaf</tissue>
    </source>
</reference>
<reference key="2">
    <citation type="submission" date="1993-07" db="EMBL/GenBank/DDBJ databases">
        <authorList>
            <person name="Handa H."/>
            <person name="Shimizu T."/>
            <person name="Nakajima K."/>
            <person name="Naito T."/>
        </authorList>
    </citation>
    <scope>NUCLEOTIDE SEQUENCE [GENOMIC DNA]</scope>
</reference>
<reference key="3">
    <citation type="journal article" date="1998" name="Curr. Genet.">
        <title>Rapeseed mitochondrial ccb206, a gene involved in cytochrome c biogenesis, is co-transcribed with the nad3 and rps12 genes: organization, transcription, and RNA editing of the nad3/rps12/ccb206 locus.</title>
        <authorList>
            <person name="Itani K."/>
            <person name="Handa H."/>
        </authorList>
    </citation>
    <scope>RNA EDITING</scope>
</reference>
<reference key="4">
    <citation type="journal article" date="2003" name="Nucleic Acids Res.">
        <title>The complete nucleotide sequence and RNA editing content of the mitochondrial genome of rapeseed (Brassica napus L.): comparative analysis of the mitochondrial genomes of rapeseed and Arabidopsis thaliana.</title>
        <authorList>
            <person name="Handa H."/>
        </authorList>
    </citation>
    <scope>RNA EDITING</scope>
    <source>
        <tissue>Leaf</tissue>
    </source>
</reference>
<gene>
    <name type="primary">RPS12</name>
</gene>
<sequence length="125" mass="14259">MPTFNQLIRHGREEKRRTDRTRALDKCPQKLGACLRVSTRTPKKPNSALRKIAKVRLSNRHDIFAYIPGEGHNLQEHSQVLIRGGRVKDLPGVKFHCIRGVKDLMGIPGRRRGRSKYGAEKPKSI</sequence>
<organism>
    <name type="scientific">Brassica napus</name>
    <name type="common">Rape</name>
    <dbReference type="NCBI Taxonomy" id="3708"/>
    <lineage>
        <taxon>Eukaryota</taxon>
        <taxon>Viridiplantae</taxon>
        <taxon>Streptophyta</taxon>
        <taxon>Embryophyta</taxon>
        <taxon>Tracheophyta</taxon>
        <taxon>Spermatophyta</taxon>
        <taxon>Magnoliopsida</taxon>
        <taxon>eudicotyledons</taxon>
        <taxon>Gunneridae</taxon>
        <taxon>Pentapetalae</taxon>
        <taxon>rosids</taxon>
        <taxon>malvids</taxon>
        <taxon>Brassicales</taxon>
        <taxon>Brassicaceae</taxon>
        <taxon>Brassiceae</taxon>
        <taxon>Brassica</taxon>
    </lineage>
</organism>
<geneLocation type="mitochondrion"/>